<proteinExistence type="inferred from homology"/>
<gene>
    <name type="primary">PPE24</name>
    <name type="ordered locus">Rv1753c</name>
</gene>
<organism>
    <name type="scientific">Mycobacterium tuberculosis (strain ATCC 25618 / H37Rv)</name>
    <dbReference type="NCBI Taxonomy" id="83332"/>
    <lineage>
        <taxon>Bacteria</taxon>
        <taxon>Bacillati</taxon>
        <taxon>Actinomycetota</taxon>
        <taxon>Actinomycetes</taxon>
        <taxon>Mycobacteriales</taxon>
        <taxon>Mycobacteriaceae</taxon>
        <taxon>Mycobacterium</taxon>
        <taxon>Mycobacterium tuberculosis complex</taxon>
    </lineage>
</organism>
<accession>P9WI15</accession>
<accession>L0TAA3</accession>
<accession>Q79FL2</accession>
<accession>Q8VJX6</accession>
<protein>
    <recommendedName>
        <fullName>Uncharacterized PPE family protein PPE24</fullName>
    </recommendedName>
</protein>
<reference key="1">
    <citation type="journal article" date="1998" name="Nature">
        <title>Deciphering the biology of Mycobacterium tuberculosis from the complete genome sequence.</title>
        <authorList>
            <person name="Cole S.T."/>
            <person name="Brosch R."/>
            <person name="Parkhill J."/>
            <person name="Garnier T."/>
            <person name="Churcher C.M."/>
            <person name="Harris D.E."/>
            <person name="Gordon S.V."/>
            <person name="Eiglmeier K."/>
            <person name="Gas S."/>
            <person name="Barry C.E. III"/>
            <person name="Tekaia F."/>
            <person name="Badcock K."/>
            <person name="Basham D."/>
            <person name="Brown D."/>
            <person name="Chillingworth T."/>
            <person name="Connor R."/>
            <person name="Davies R.M."/>
            <person name="Devlin K."/>
            <person name="Feltwell T."/>
            <person name="Gentles S."/>
            <person name="Hamlin N."/>
            <person name="Holroyd S."/>
            <person name="Hornsby T."/>
            <person name="Jagels K."/>
            <person name="Krogh A."/>
            <person name="McLean J."/>
            <person name="Moule S."/>
            <person name="Murphy L.D."/>
            <person name="Oliver S."/>
            <person name="Osborne J."/>
            <person name="Quail M.A."/>
            <person name="Rajandream M.A."/>
            <person name="Rogers J."/>
            <person name="Rutter S."/>
            <person name="Seeger K."/>
            <person name="Skelton S."/>
            <person name="Squares S."/>
            <person name="Squares R."/>
            <person name="Sulston J.E."/>
            <person name="Taylor K."/>
            <person name="Whitehead S."/>
            <person name="Barrell B.G."/>
        </authorList>
    </citation>
    <scope>NUCLEOTIDE SEQUENCE [LARGE SCALE GENOMIC DNA]</scope>
    <source>
        <strain>ATCC 25618 / H37Rv</strain>
    </source>
</reference>
<reference key="2">
    <citation type="journal article" date="2008" name="BMC Syst. Biol.">
        <title>targetTB: a target identification pipeline for Mycobacterium tuberculosis through an interactome, reactome and genome-scale structural analysis.</title>
        <authorList>
            <person name="Raman K."/>
            <person name="Yeturu K."/>
            <person name="Chandra N."/>
        </authorList>
    </citation>
    <scope>IDENTIFICATION AS A DRUG TARGET [LARGE SCALE ANALYSIS]</scope>
</reference>
<dbReference type="EMBL" id="AL123456">
    <property type="protein sequence ID" value="CCP44519.1"/>
    <property type="molecule type" value="Genomic_DNA"/>
</dbReference>
<dbReference type="PIR" id="B70987">
    <property type="entry name" value="B70987"/>
</dbReference>
<dbReference type="RefSeq" id="WP_010886126.1">
    <property type="nucleotide sequence ID" value="NC_018143.2"/>
</dbReference>
<dbReference type="RefSeq" id="YP_177830.1">
    <property type="nucleotide sequence ID" value="NC_000962.3"/>
</dbReference>
<dbReference type="STRING" id="83332.Rv1753c"/>
<dbReference type="PaxDb" id="83332-Rv1753c"/>
<dbReference type="GeneID" id="885544"/>
<dbReference type="KEGG" id="mtu:Rv1753c"/>
<dbReference type="KEGG" id="mtv:RVBD_1753c"/>
<dbReference type="PATRIC" id="fig|83332.111.peg.1949"/>
<dbReference type="TubercuList" id="Rv1753c"/>
<dbReference type="eggNOG" id="COG5263">
    <property type="taxonomic scope" value="Bacteria"/>
</dbReference>
<dbReference type="eggNOG" id="COG5651">
    <property type="taxonomic scope" value="Bacteria"/>
</dbReference>
<dbReference type="InParanoid" id="P9WI15"/>
<dbReference type="OrthoDB" id="4715386at2"/>
<dbReference type="PhylomeDB" id="P9WI15"/>
<dbReference type="Proteomes" id="UP000001584">
    <property type="component" value="Chromosome"/>
</dbReference>
<dbReference type="GO" id="GO:0052572">
    <property type="term" value="P:response to host immune response"/>
    <property type="evidence" value="ECO:0000318"/>
    <property type="project" value="GO_Central"/>
</dbReference>
<dbReference type="FunFam" id="1.20.1260.20:FF:000001">
    <property type="entry name" value="PPE family protein PPE41"/>
    <property type="match status" value="1"/>
</dbReference>
<dbReference type="Gene3D" id="1.20.1260.20">
    <property type="entry name" value="PPE superfamily"/>
    <property type="match status" value="1"/>
</dbReference>
<dbReference type="InterPro" id="IPR002989">
    <property type="entry name" value="Mycobac_pentapep"/>
</dbReference>
<dbReference type="InterPro" id="IPR000030">
    <property type="entry name" value="PPE_dom"/>
</dbReference>
<dbReference type="InterPro" id="IPR038332">
    <property type="entry name" value="PPE_sf"/>
</dbReference>
<dbReference type="PANTHER" id="PTHR46766">
    <property type="entry name" value="GLUTAMINE-RICH PROTEIN 2"/>
    <property type="match status" value="1"/>
</dbReference>
<dbReference type="PANTHER" id="PTHR46766:SF1">
    <property type="entry name" value="GLUTAMINE-RICH PROTEIN 2"/>
    <property type="match status" value="1"/>
</dbReference>
<dbReference type="Pfam" id="PF01469">
    <property type="entry name" value="Pentapeptide_2"/>
    <property type="match status" value="2"/>
</dbReference>
<dbReference type="Pfam" id="PF00823">
    <property type="entry name" value="PPE"/>
    <property type="match status" value="1"/>
</dbReference>
<dbReference type="SUPFAM" id="SSF140459">
    <property type="entry name" value="PE/PPE dimer-like"/>
    <property type="match status" value="1"/>
</dbReference>
<evidence type="ECO:0000305" key="1"/>
<sequence length="1053" mass="104650">MNFSVLPPEINSALIFAGAGPEPMAAAATAWDGLAMELASAAASFGSVTSGLVGGAWQGASSSAMAAAAAPYAAWLAAAAVQAEQTAAQAAAMIAEFEAVKTAVVQPMLVAANRADLVSLVMSNLFGQNAPAIAAIEATYEQMWAADVSAMSAYHAGASAIASALSPFSKPLQNLAGLPAWLASGAPAAAMTAAAGIPALAGGPTAINLGIANVGGGNVGNANNGLANIGNANLGNYNFGSGNFGNSNIGSASLGNNNIGFGNLGSNNVGVGNLGNLNTGFANTGLGNFGFGNTGNNNIGIGLTGNNQIGIGGLNSGTGNFGLFNSGSGNVGFFNSGNGNFGIGNSGNFNTGGWNSGHGNTGFFNAGSFNTGMLDVGNANTGSLNTGSYNMGDFNPGSSNTGTFNTGNANTGFLNAGNINTGVFNIGHMNNGLFNTGDMNNGVFYRGVGQGSLQFSITTPDLTLPPLQIPGISVPAFSLPAITLPSLNIPAATTPANITVGAFSLPGLTLPSLNIPAATTPANITVGAFSLPGLTLPSLNIPAATTPANITVGAFSLPGLTLPSLNIPAATTPANITVGAFSLPGLTLPSLNIPAATTPANITVGAFSLPGLTLPSLNIPAATTPANITVSGFQLPPLSIPSVAIPPVTVPPITVGAFNLPPLQIPEVTIPQLTIPAGITIGGFSLPAIHTQPITVGQIGVGQFGLPSIGWDVFLSTPRITVPAFGIPFTLQFQTNVPALQPPGGGLSTFTNGALIFGEFDLPQLVVHPYTLTGPIVIGSFFLPAFNIPGIDVPAINVDGFTLPQITTPAITTPEFAIPPIGVGGFTLPQITTQEIITPELTINSIGVGGFTLPQITTPPITTPPLTIDPINLTGFTLPQITTPPITTPPLTIDPINLTGFTLPQITTPPITTPPLTIEPIGVGGFTTPPLTVPGIHLPSTTIGAFAIPGGPGYFNSSTAPSSGFFNSGAGGNSGFGNNGSGLSGWFNTNPAGLLGGSGYQNFGGLSSGFSNLGSGVSGFANRGILPFSVASVVSGFANIGTNLAGFFQGTTS</sequence>
<name>PPE24_MYCTU</name>
<comment type="miscellaneous">
    <text>Was identified as a high-confidence drug target.</text>
</comment>
<comment type="similarity">
    <text evidence="1">Belongs to the mycobacterial PPE family.</text>
</comment>
<feature type="chain" id="PRO_0000378480" description="Uncharacterized PPE family protein PPE24">
    <location>
        <begin position="1"/>
        <end position="1053"/>
    </location>
</feature>
<keyword id="KW-1185">Reference proteome</keyword>